<accession>Q5GRW9</accession>
<sequence length="598" mass="66645">MDNVRNFAIIAHIDHGKSTLADRLIEECNGLEAREMTNQVLDSMDIERERGITIKAQTVRLNYTANDGNRYCLNLMDTPGHVDFSYEVSRSLAACEGSLLVIDSSQGVEAQTLANVYKAIDNNHEIIVVLNKVDLPASDPERVKLQVEEIIGIGSSESILISAKTGLGIRDVLEAIITKLPAPQGNINAPLQAILVDSWYDPYLGVVILVRVKNGVLKKGMKIVMMSNNAVYQVDNIGIFTPKKVMTSELSAGEVGFITASMRKMADCKVGDTITEEKKPCGEALPGFKEIHPVVFCSIFPNKTDGFKYLREALEKLHLNDTSFTFEAETSNALGYGFRCGFLGMLHLEVIQERLEREFDLDLTATAPSVIYEVTTQSGETLNIHNPNDMPDSVKIKIVEEPWITATIMVPDQYLGEILSLCDERRGKQEDLSYVGNTMTALLKYKLPLSEVVLDFYDRLKSISKGYASLDWEISNYQESQIDKLSFLVNGEPVDALACIVHKSRSEKRGREICARLRDLIPRQQYKIAIQATVGGKIVARETINPYRKDVTAKLYGGDVTRKMKLLEKQKKGKKRLYSVGNVDIPHNAFIQALKIGD</sequence>
<dbReference type="EC" id="3.6.5.n1" evidence="1"/>
<dbReference type="EMBL" id="AE017321">
    <property type="protein sequence ID" value="AAW71255.1"/>
    <property type="molecule type" value="Genomic_DNA"/>
</dbReference>
<dbReference type="RefSeq" id="WP_011256865.1">
    <property type="nucleotide sequence ID" value="NC_006833.1"/>
</dbReference>
<dbReference type="SMR" id="Q5GRW9"/>
<dbReference type="STRING" id="292805.Wbm0667"/>
<dbReference type="KEGG" id="wbm:Wbm0667"/>
<dbReference type="eggNOG" id="COG0481">
    <property type="taxonomic scope" value="Bacteria"/>
</dbReference>
<dbReference type="HOGENOM" id="CLU_009995_3_3_5"/>
<dbReference type="Proteomes" id="UP000000534">
    <property type="component" value="Chromosome"/>
</dbReference>
<dbReference type="GO" id="GO:0005886">
    <property type="term" value="C:plasma membrane"/>
    <property type="evidence" value="ECO:0007669"/>
    <property type="project" value="UniProtKB-SubCell"/>
</dbReference>
<dbReference type="GO" id="GO:0005525">
    <property type="term" value="F:GTP binding"/>
    <property type="evidence" value="ECO:0007669"/>
    <property type="project" value="UniProtKB-UniRule"/>
</dbReference>
<dbReference type="GO" id="GO:0003924">
    <property type="term" value="F:GTPase activity"/>
    <property type="evidence" value="ECO:0007669"/>
    <property type="project" value="UniProtKB-UniRule"/>
</dbReference>
<dbReference type="GO" id="GO:0097216">
    <property type="term" value="F:guanosine tetraphosphate binding"/>
    <property type="evidence" value="ECO:0007669"/>
    <property type="project" value="UniProtKB-ARBA"/>
</dbReference>
<dbReference type="GO" id="GO:0043022">
    <property type="term" value="F:ribosome binding"/>
    <property type="evidence" value="ECO:0007669"/>
    <property type="project" value="UniProtKB-UniRule"/>
</dbReference>
<dbReference type="GO" id="GO:0003746">
    <property type="term" value="F:translation elongation factor activity"/>
    <property type="evidence" value="ECO:0007669"/>
    <property type="project" value="UniProtKB-UniRule"/>
</dbReference>
<dbReference type="GO" id="GO:0045727">
    <property type="term" value="P:positive regulation of translation"/>
    <property type="evidence" value="ECO:0007669"/>
    <property type="project" value="UniProtKB-UniRule"/>
</dbReference>
<dbReference type="CDD" id="cd03699">
    <property type="entry name" value="EF4_II"/>
    <property type="match status" value="1"/>
</dbReference>
<dbReference type="CDD" id="cd16260">
    <property type="entry name" value="EF4_III"/>
    <property type="match status" value="1"/>
</dbReference>
<dbReference type="CDD" id="cd01890">
    <property type="entry name" value="LepA"/>
    <property type="match status" value="1"/>
</dbReference>
<dbReference type="CDD" id="cd03709">
    <property type="entry name" value="lepA_C"/>
    <property type="match status" value="1"/>
</dbReference>
<dbReference type="FunFam" id="3.40.50.300:FF:000078">
    <property type="entry name" value="Elongation factor 4"/>
    <property type="match status" value="1"/>
</dbReference>
<dbReference type="FunFam" id="2.40.30.10:FF:000015">
    <property type="entry name" value="Translation factor GUF1, mitochondrial"/>
    <property type="match status" value="1"/>
</dbReference>
<dbReference type="FunFam" id="3.30.70.240:FF:000007">
    <property type="entry name" value="Translation factor GUF1, mitochondrial"/>
    <property type="match status" value="1"/>
</dbReference>
<dbReference type="FunFam" id="3.30.70.2570:FF:000001">
    <property type="entry name" value="Translation factor GUF1, mitochondrial"/>
    <property type="match status" value="1"/>
</dbReference>
<dbReference type="FunFam" id="3.30.70.870:FF:000004">
    <property type="entry name" value="Translation factor GUF1, mitochondrial"/>
    <property type="match status" value="1"/>
</dbReference>
<dbReference type="Gene3D" id="3.30.70.240">
    <property type="match status" value="1"/>
</dbReference>
<dbReference type="Gene3D" id="3.30.70.2570">
    <property type="entry name" value="Elongation factor 4, C-terminal domain"/>
    <property type="match status" value="1"/>
</dbReference>
<dbReference type="Gene3D" id="3.30.70.870">
    <property type="entry name" value="Elongation Factor G (Translational Gtpase), domain 3"/>
    <property type="match status" value="1"/>
</dbReference>
<dbReference type="Gene3D" id="3.40.50.300">
    <property type="entry name" value="P-loop containing nucleotide triphosphate hydrolases"/>
    <property type="match status" value="1"/>
</dbReference>
<dbReference type="Gene3D" id="2.40.30.10">
    <property type="entry name" value="Translation factors"/>
    <property type="match status" value="1"/>
</dbReference>
<dbReference type="HAMAP" id="MF_00071">
    <property type="entry name" value="LepA"/>
    <property type="match status" value="1"/>
</dbReference>
<dbReference type="InterPro" id="IPR006297">
    <property type="entry name" value="EF-4"/>
</dbReference>
<dbReference type="InterPro" id="IPR041095">
    <property type="entry name" value="EFG_II"/>
</dbReference>
<dbReference type="InterPro" id="IPR035647">
    <property type="entry name" value="EFG_III/V"/>
</dbReference>
<dbReference type="InterPro" id="IPR000640">
    <property type="entry name" value="EFG_V-like"/>
</dbReference>
<dbReference type="InterPro" id="IPR004161">
    <property type="entry name" value="EFTu-like_2"/>
</dbReference>
<dbReference type="InterPro" id="IPR031157">
    <property type="entry name" value="G_TR_CS"/>
</dbReference>
<dbReference type="InterPro" id="IPR038363">
    <property type="entry name" value="LepA_C_sf"/>
</dbReference>
<dbReference type="InterPro" id="IPR013842">
    <property type="entry name" value="LepA_CTD"/>
</dbReference>
<dbReference type="InterPro" id="IPR035654">
    <property type="entry name" value="LepA_IV"/>
</dbReference>
<dbReference type="InterPro" id="IPR027417">
    <property type="entry name" value="P-loop_NTPase"/>
</dbReference>
<dbReference type="InterPro" id="IPR005225">
    <property type="entry name" value="Small_GTP-bd"/>
</dbReference>
<dbReference type="InterPro" id="IPR000795">
    <property type="entry name" value="T_Tr_GTP-bd_dom"/>
</dbReference>
<dbReference type="InterPro" id="IPR009000">
    <property type="entry name" value="Transl_B-barrel_sf"/>
</dbReference>
<dbReference type="NCBIfam" id="TIGR01393">
    <property type="entry name" value="lepA"/>
    <property type="match status" value="1"/>
</dbReference>
<dbReference type="NCBIfam" id="TIGR00231">
    <property type="entry name" value="small_GTP"/>
    <property type="match status" value="1"/>
</dbReference>
<dbReference type="PANTHER" id="PTHR43512:SF4">
    <property type="entry name" value="TRANSLATION FACTOR GUF1 HOMOLOG, CHLOROPLASTIC"/>
    <property type="match status" value="1"/>
</dbReference>
<dbReference type="PANTHER" id="PTHR43512">
    <property type="entry name" value="TRANSLATION FACTOR GUF1-RELATED"/>
    <property type="match status" value="1"/>
</dbReference>
<dbReference type="Pfam" id="PF00679">
    <property type="entry name" value="EFG_C"/>
    <property type="match status" value="1"/>
</dbReference>
<dbReference type="Pfam" id="PF14492">
    <property type="entry name" value="EFG_III"/>
    <property type="match status" value="1"/>
</dbReference>
<dbReference type="Pfam" id="PF00009">
    <property type="entry name" value="GTP_EFTU"/>
    <property type="match status" value="1"/>
</dbReference>
<dbReference type="Pfam" id="PF03144">
    <property type="entry name" value="GTP_EFTU_D2"/>
    <property type="match status" value="1"/>
</dbReference>
<dbReference type="Pfam" id="PF06421">
    <property type="entry name" value="LepA_C"/>
    <property type="match status" value="1"/>
</dbReference>
<dbReference type="PRINTS" id="PR00315">
    <property type="entry name" value="ELONGATNFCT"/>
</dbReference>
<dbReference type="SUPFAM" id="SSF54980">
    <property type="entry name" value="EF-G C-terminal domain-like"/>
    <property type="match status" value="2"/>
</dbReference>
<dbReference type="SUPFAM" id="SSF52540">
    <property type="entry name" value="P-loop containing nucleoside triphosphate hydrolases"/>
    <property type="match status" value="1"/>
</dbReference>
<dbReference type="SUPFAM" id="SSF50447">
    <property type="entry name" value="Translation proteins"/>
    <property type="match status" value="1"/>
</dbReference>
<dbReference type="PROSITE" id="PS00301">
    <property type="entry name" value="G_TR_1"/>
    <property type="match status" value="1"/>
</dbReference>
<dbReference type="PROSITE" id="PS51722">
    <property type="entry name" value="G_TR_2"/>
    <property type="match status" value="1"/>
</dbReference>
<organism>
    <name type="scientific">Wolbachia sp. subsp. Brugia malayi (strain TRS)</name>
    <dbReference type="NCBI Taxonomy" id="292805"/>
    <lineage>
        <taxon>Bacteria</taxon>
        <taxon>Pseudomonadati</taxon>
        <taxon>Pseudomonadota</taxon>
        <taxon>Alphaproteobacteria</taxon>
        <taxon>Rickettsiales</taxon>
        <taxon>Anaplasmataceae</taxon>
        <taxon>Wolbachieae</taxon>
        <taxon>Wolbachia</taxon>
    </lineage>
</organism>
<feature type="chain" id="PRO_0000224809" description="Elongation factor 4">
    <location>
        <begin position="1"/>
        <end position="598"/>
    </location>
</feature>
<feature type="domain" description="tr-type G">
    <location>
        <begin position="2"/>
        <end position="184"/>
    </location>
</feature>
<feature type="binding site" evidence="1">
    <location>
        <begin position="14"/>
        <end position="19"/>
    </location>
    <ligand>
        <name>GTP</name>
        <dbReference type="ChEBI" id="CHEBI:37565"/>
    </ligand>
</feature>
<feature type="binding site" evidence="1">
    <location>
        <begin position="131"/>
        <end position="134"/>
    </location>
    <ligand>
        <name>GTP</name>
        <dbReference type="ChEBI" id="CHEBI:37565"/>
    </ligand>
</feature>
<evidence type="ECO:0000255" key="1">
    <source>
        <dbReference type="HAMAP-Rule" id="MF_00071"/>
    </source>
</evidence>
<gene>
    <name evidence="1" type="primary">lepA</name>
    <name type="ordered locus">Wbm0667</name>
</gene>
<keyword id="KW-1003">Cell membrane</keyword>
<keyword id="KW-0342">GTP-binding</keyword>
<keyword id="KW-0378">Hydrolase</keyword>
<keyword id="KW-0472">Membrane</keyword>
<keyword id="KW-0547">Nucleotide-binding</keyword>
<keyword id="KW-0648">Protein biosynthesis</keyword>
<keyword id="KW-1185">Reference proteome</keyword>
<name>LEPA_WOLTR</name>
<reference key="1">
    <citation type="journal article" date="2005" name="PLoS Biol.">
        <title>The Wolbachia genome of Brugia malayi: endosymbiont evolution within a human pathogenic nematode.</title>
        <authorList>
            <person name="Foster J."/>
            <person name="Ganatra M."/>
            <person name="Kamal I."/>
            <person name="Ware J."/>
            <person name="Makarova K."/>
            <person name="Ivanova N."/>
            <person name="Bhattacharyya A."/>
            <person name="Kapatral V."/>
            <person name="Kumar S."/>
            <person name="Posfai J."/>
            <person name="Vincze T."/>
            <person name="Ingram J."/>
            <person name="Moran L."/>
            <person name="Lapidus A."/>
            <person name="Omelchenko M."/>
            <person name="Kyrpides N."/>
            <person name="Ghedin E."/>
            <person name="Wang S."/>
            <person name="Goltsman E."/>
            <person name="Joukov V."/>
            <person name="Ostrovskaya O."/>
            <person name="Tsukerman K."/>
            <person name="Mazur M."/>
            <person name="Comb D."/>
            <person name="Koonin E."/>
            <person name="Slatko B."/>
        </authorList>
    </citation>
    <scope>NUCLEOTIDE SEQUENCE [LARGE SCALE GENOMIC DNA]</scope>
    <source>
        <strain>TRS</strain>
    </source>
</reference>
<protein>
    <recommendedName>
        <fullName evidence="1">Elongation factor 4</fullName>
        <shortName evidence="1">EF-4</shortName>
        <ecNumber evidence="1">3.6.5.n1</ecNumber>
    </recommendedName>
    <alternativeName>
        <fullName evidence="1">Ribosomal back-translocase LepA</fullName>
    </alternativeName>
</protein>
<proteinExistence type="inferred from homology"/>
<comment type="function">
    <text evidence="1">Required for accurate and efficient protein synthesis under certain stress conditions. May act as a fidelity factor of the translation reaction, by catalyzing a one-codon backward translocation of tRNAs on improperly translocated ribosomes. Back-translocation proceeds from a post-translocation (POST) complex to a pre-translocation (PRE) complex, thus giving elongation factor G a second chance to translocate the tRNAs correctly. Binds to ribosomes in a GTP-dependent manner.</text>
</comment>
<comment type="catalytic activity">
    <reaction evidence="1">
        <text>GTP + H2O = GDP + phosphate + H(+)</text>
        <dbReference type="Rhea" id="RHEA:19669"/>
        <dbReference type="ChEBI" id="CHEBI:15377"/>
        <dbReference type="ChEBI" id="CHEBI:15378"/>
        <dbReference type="ChEBI" id="CHEBI:37565"/>
        <dbReference type="ChEBI" id="CHEBI:43474"/>
        <dbReference type="ChEBI" id="CHEBI:58189"/>
        <dbReference type="EC" id="3.6.5.n1"/>
    </reaction>
</comment>
<comment type="subcellular location">
    <subcellularLocation>
        <location evidence="1">Cell membrane</location>
        <topology evidence="1">Peripheral membrane protein</topology>
        <orientation evidence="1">Cytoplasmic side</orientation>
    </subcellularLocation>
</comment>
<comment type="similarity">
    <text evidence="1">Belongs to the TRAFAC class translation factor GTPase superfamily. Classic translation factor GTPase family. LepA subfamily.</text>
</comment>